<reference key="1">
    <citation type="submission" date="2009-04" db="EMBL/GenBank/DDBJ databases">
        <title>Genome sequence of Bacillus anthracis A0248.</title>
        <authorList>
            <person name="Dodson R.J."/>
            <person name="Munk A.C."/>
            <person name="Bruce D."/>
            <person name="Detter C."/>
            <person name="Tapia R."/>
            <person name="Sutton G."/>
            <person name="Sims D."/>
            <person name="Brettin T."/>
        </authorList>
    </citation>
    <scope>NUCLEOTIDE SEQUENCE [LARGE SCALE GENOMIC DNA]</scope>
    <source>
        <strain>A0248</strain>
    </source>
</reference>
<proteinExistence type="inferred from homology"/>
<gene>
    <name evidence="1" type="primary">asnA</name>
    <name type="ordered locus">BAA_1876</name>
</gene>
<evidence type="ECO:0000255" key="1">
    <source>
        <dbReference type="HAMAP-Rule" id="MF_00555"/>
    </source>
</evidence>
<protein>
    <recommendedName>
        <fullName evidence="1">Aspartate--ammonia ligase</fullName>
        <ecNumber evidence="1">6.3.1.1</ecNumber>
    </recommendedName>
    <alternativeName>
        <fullName evidence="1">Asparagine synthetase A</fullName>
    </alternativeName>
</protein>
<feature type="chain" id="PRO_1000146687" description="Aspartate--ammonia ligase">
    <location>
        <begin position="1"/>
        <end position="327"/>
    </location>
</feature>
<keyword id="KW-0028">Amino-acid biosynthesis</keyword>
<keyword id="KW-0061">Asparagine biosynthesis</keyword>
<keyword id="KW-0067">ATP-binding</keyword>
<keyword id="KW-0963">Cytoplasm</keyword>
<keyword id="KW-0436">Ligase</keyword>
<keyword id="KW-0547">Nucleotide-binding</keyword>
<organism>
    <name type="scientific">Bacillus anthracis (strain A0248)</name>
    <dbReference type="NCBI Taxonomy" id="592021"/>
    <lineage>
        <taxon>Bacteria</taxon>
        <taxon>Bacillati</taxon>
        <taxon>Bacillota</taxon>
        <taxon>Bacilli</taxon>
        <taxon>Bacillales</taxon>
        <taxon>Bacillaceae</taxon>
        <taxon>Bacillus</taxon>
        <taxon>Bacillus cereus group</taxon>
    </lineage>
</organism>
<accession>C3P6N8</accession>
<name>ASNA_BACAA</name>
<sequence length="327" mass="38087">MYQSLMTVRETQIAIKEVKTFFEDQLAKRLELFRVSAPLFVTKKSGLNDHLNGVERPIEFDMLHSGEELEIVHSLAKWKRFALHEYGYEAGEGLYTNMNAIRRDEELDATHSIYVDQWDWEKIVQKEWRTVDYLQKTVLTIYGIFKDLEDHLFEKYPFLGKYLPEEIVFVTSQELEDKYPELTPKDREHAIAKEHGAVFIIGIGDALRSGEKHDGRAADYDDWKLNGDILFWHPVLQSSFELSSMGIRVDSKSLDEQLTKTGEDFKREYDFHKGILEDVLPLTIGGGIGQSRMCMYFLRKAHIGEVQSSVWPDDLREACKKENIHLF</sequence>
<comment type="catalytic activity">
    <reaction evidence="1">
        <text>L-aspartate + NH4(+) + ATP = L-asparagine + AMP + diphosphate + H(+)</text>
        <dbReference type="Rhea" id="RHEA:11372"/>
        <dbReference type="ChEBI" id="CHEBI:15378"/>
        <dbReference type="ChEBI" id="CHEBI:28938"/>
        <dbReference type="ChEBI" id="CHEBI:29991"/>
        <dbReference type="ChEBI" id="CHEBI:30616"/>
        <dbReference type="ChEBI" id="CHEBI:33019"/>
        <dbReference type="ChEBI" id="CHEBI:58048"/>
        <dbReference type="ChEBI" id="CHEBI:456215"/>
        <dbReference type="EC" id="6.3.1.1"/>
    </reaction>
</comment>
<comment type="pathway">
    <text evidence="1">Amino-acid biosynthesis; L-asparagine biosynthesis; L-asparagine from L-aspartate (ammonia route): step 1/1.</text>
</comment>
<comment type="subcellular location">
    <subcellularLocation>
        <location evidence="1">Cytoplasm</location>
    </subcellularLocation>
</comment>
<comment type="similarity">
    <text evidence="1">Belongs to the class-II aminoacyl-tRNA synthetase family. AsnA subfamily.</text>
</comment>
<dbReference type="EC" id="6.3.1.1" evidence="1"/>
<dbReference type="EMBL" id="CP001598">
    <property type="protein sequence ID" value="ACQ49968.1"/>
    <property type="molecule type" value="Genomic_DNA"/>
</dbReference>
<dbReference type="RefSeq" id="WP_000284908.1">
    <property type="nucleotide sequence ID" value="NC_012659.1"/>
</dbReference>
<dbReference type="SMR" id="C3P6N8"/>
<dbReference type="GeneID" id="69532735"/>
<dbReference type="KEGG" id="bai:BAA_1876"/>
<dbReference type="HOGENOM" id="CLU_071543_0_0_9"/>
<dbReference type="UniPathway" id="UPA00134">
    <property type="reaction ID" value="UER00194"/>
</dbReference>
<dbReference type="GO" id="GO:0005829">
    <property type="term" value="C:cytosol"/>
    <property type="evidence" value="ECO:0007669"/>
    <property type="project" value="TreeGrafter"/>
</dbReference>
<dbReference type="GO" id="GO:0004071">
    <property type="term" value="F:aspartate-ammonia ligase activity"/>
    <property type="evidence" value="ECO:0007669"/>
    <property type="project" value="UniProtKB-UniRule"/>
</dbReference>
<dbReference type="GO" id="GO:0005524">
    <property type="term" value="F:ATP binding"/>
    <property type="evidence" value="ECO:0007669"/>
    <property type="project" value="UniProtKB-UniRule"/>
</dbReference>
<dbReference type="GO" id="GO:0140096">
    <property type="term" value="F:catalytic activity, acting on a protein"/>
    <property type="evidence" value="ECO:0007669"/>
    <property type="project" value="UniProtKB-ARBA"/>
</dbReference>
<dbReference type="GO" id="GO:0016740">
    <property type="term" value="F:transferase activity"/>
    <property type="evidence" value="ECO:0007669"/>
    <property type="project" value="UniProtKB-ARBA"/>
</dbReference>
<dbReference type="GO" id="GO:0070981">
    <property type="term" value="P:L-asparagine biosynthetic process"/>
    <property type="evidence" value="ECO:0007669"/>
    <property type="project" value="UniProtKB-UniRule"/>
</dbReference>
<dbReference type="CDD" id="cd00645">
    <property type="entry name" value="AsnA"/>
    <property type="match status" value="1"/>
</dbReference>
<dbReference type="Gene3D" id="3.30.930.10">
    <property type="entry name" value="Bira Bifunctional Protein, Domain 2"/>
    <property type="match status" value="1"/>
</dbReference>
<dbReference type="HAMAP" id="MF_00555">
    <property type="entry name" value="AsnA"/>
    <property type="match status" value="1"/>
</dbReference>
<dbReference type="InterPro" id="IPR006195">
    <property type="entry name" value="aa-tRNA-synth_II"/>
</dbReference>
<dbReference type="InterPro" id="IPR045864">
    <property type="entry name" value="aa-tRNA-synth_II/BPL/LPL"/>
</dbReference>
<dbReference type="InterPro" id="IPR004618">
    <property type="entry name" value="AsnA"/>
</dbReference>
<dbReference type="NCBIfam" id="TIGR00669">
    <property type="entry name" value="asnA"/>
    <property type="match status" value="1"/>
</dbReference>
<dbReference type="PANTHER" id="PTHR30073">
    <property type="entry name" value="ASPARTATE--AMMONIA LIGASE"/>
    <property type="match status" value="1"/>
</dbReference>
<dbReference type="PANTHER" id="PTHR30073:SF5">
    <property type="entry name" value="ASPARTATE--AMMONIA LIGASE"/>
    <property type="match status" value="1"/>
</dbReference>
<dbReference type="Pfam" id="PF03590">
    <property type="entry name" value="AsnA"/>
    <property type="match status" value="1"/>
</dbReference>
<dbReference type="PIRSF" id="PIRSF001555">
    <property type="entry name" value="Asp_ammon_ligase"/>
    <property type="match status" value="1"/>
</dbReference>
<dbReference type="SUPFAM" id="SSF55681">
    <property type="entry name" value="Class II aaRS and biotin synthetases"/>
    <property type="match status" value="1"/>
</dbReference>
<dbReference type="PROSITE" id="PS50862">
    <property type="entry name" value="AA_TRNA_LIGASE_II"/>
    <property type="match status" value="1"/>
</dbReference>